<organism>
    <name type="scientific">Actinobacillus pleuropneumoniae serotype 3 (strain JL03)</name>
    <dbReference type="NCBI Taxonomy" id="434271"/>
    <lineage>
        <taxon>Bacteria</taxon>
        <taxon>Pseudomonadati</taxon>
        <taxon>Pseudomonadota</taxon>
        <taxon>Gammaproteobacteria</taxon>
        <taxon>Pasteurellales</taxon>
        <taxon>Pasteurellaceae</taxon>
        <taxon>Actinobacillus</taxon>
    </lineage>
</organism>
<sequence>MEKIIIDAEQFQRTISRISHQIIEKHSSLDNLVLVGIKRRGAEIAEMLQSRIAELAQTELPLMALDITFYRDDLHLDHQDPVYTGVESQIDITGKNVILIDDVLFTGRTIRAALDALLDFGRATRIELVILVDRGHRELPIRADYVGKNIPTARTEQVQVRTQFYDGMNQVVLIRAKDE</sequence>
<protein>
    <recommendedName>
        <fullName evidence="1">Bifunctional protein PyrR</fullName>
    </recommendedName>
    <domain>
        <recommendedName>
            <fullName evidence="1">Pyrimidine operon regulatory protein</fullName>
        </recommendedName>
    </domain>
    <domain>
        <recommendedName>
            <fullName evidence="1">Uracil phosphoribosyltransferase</fullName>
            <shortName evidence="1">UPRTase</shortName>
            <ecNumber evidence="1">2.4.2.9</ecNumber>
        </recommendedName>
    </domain>
</protein>
<gene>
    <name evidence="1" type="primary">pyrR</name>
    <name type="ordered locus">APJL_0422</name>
</gene>
<accession>B0BTQ6</accession>
<comment type="function">
    <text evidence="1">Regulates the transcription of the pyrimidine nucleotide (pyr) operon in response to exogenous pyrimidines.</text>
</comment>
<comment type="function">
    <text evidence="1">Also displays a weak uracil phosphoribosyltransferase activity which is not physiologically significant.</text>
</comment>
<comment type="catalytic activity">
    <reaction evidence="1">
        <text>UMP + diphosphate = 5-phospho-alpha-D-ribose 1-diphosphate + uracil</text>
        <dbReference type="Rhea" id="RHEA:13017"/>
        <dbReference type="ChEBI" id="CHEBI:17568"/>
        <dbReference type="ChEBI" id="CHEBI:33019"/>
        <dbReference type="ChEBI" id="CHEBI:57865"/>
        <dbReference type="ChEBI" id="CHEBI:58017"/>
        <dbReference type="EC" id="2.4.2.9"/>
    </reaction>
</comment>
<comment type="similarity">
    <text evidence="1">Belongs to the purine/pyrimidine phosphoribosyltransferase family. PyrR subfamily.</text>
</comment>
<feature type="chain" id="PRO_1000139182" description="Bifunctional protein PyrR">
    <location>
        <begin position="1"/>
        <end position="179"/>
    </location>
</feature>
<feature type="short sequence motif" description="PRPP-binding" evidence="1">
    <location>
        <begin position="97"/>
        <end position="109"/>
    </location>
</feature>
<evidence type="ECO:0000255" key="1">
    <source>
        <dbReference type="HAMAP-Rule" id="MF_01219"/>
    </source>
</evidence>
<dbReference type="EC" id="2.4.2.9" evidence="1"/>
<dbReference type="EMBL" id="CP000687">
    <property type="protein sequence ID" value="ABY69011.1"/>
    <property type="molecule type" value="Genomic_DNA"/>
</dbReference>
<dbReference type="RefSeq" id="WP_005600504.1">
    <property type="nucleotide sequence ID" value="NC_010278.1"/>
</dbReference>
<dbReference type="SMR" id="B0BTQ6"/>
<dbReference type="KEGG" id="apj:APJL_0422"/>
<dbReference type="HOGENOM" id="CLU_094234_2_1_6"/>
<dbReference type="Proteomes" id="UP000008547">
    <property type="component" value="Chromosome"/>
</dbReference>
<dbReference type="GO" id="GO:0004845">
    <property type="term" value="F:uracil phosphoribosyltransferase activity"/>
    <property type="evidence" value="ECO:0007669"/>
    <property type="project" value="UniProtKB-UniRule"/>
</dbReference>
<dbReference type="GO" id="GO:0006355">
    <property type="term" value="P:regulation of DNA-templated transcription"/>
    <property type="evidence" value="ECO:0007669"/>
    <property type="project" value="UniProtKB-UniRule"/>
</dbReference>
<dbReference type="CDD" id="cd06223">
    <property type="entry name" value="PRTases_typeI"/>
    <property type="match status" value="1"/>
</dbReference>
<dbReference type="FunFam" id="3.40.50.2020:FF:000020">
    <property type="entry name" value="Bifunctional protein PyrR"/>
    <property type="match status" value="1"/>
</dbReference>
<dbReference type="Gene3D" id="3.40.50.2020">
    <property type="match status" value="1"/>
</dbReference>
<dbReference type="HAMAP" id="MF_01219">
    <property type="entry name" value="PyrR"/>
    <property type="match status" value="1"/>
</dbReference>
<dbReference type="InterPro" id="IPR000836">
    <property type="entry name" value="PRibTrfase_dom"/>
</dbReference>
<dbReference type="InterPro" id="IPR029057">
    <property type="entry name" value="PRTase-like"/>
</dbReference>
<dbReference type="InterPro" id="IPR023050">
    <property type="entry name" value="PyrR"/>
</dbReference>
<dbReference type="InterPro" id="IPR050137">
    <property type="entry name" value="PyrR_bifunctional"/>
</dbReference>
<dbReference type="NCBIfam" id="NF003549">
    <property type="entry name" value="PRK05205.1-5"/>
    <property type="match status" value="1"/>
</dbReference>
<dbReference type="PANTHER" id="PTHR11608">
    <property type="entry name" value="BIFUNCTIONAL PROTEIN PYRR"/>
    <property type="match status" value="1"/>
</dbReference>
<dbReference type="PANTHER" id="PTHR11608:SF0">
    <property type="entry name" value="BIFUNCTIONAL PROTEIN PYRR"/>
    <property type="match status" value="1"/>
</dbReference>
<dbReference type="Pfam" id="PF00156">
    <property type="entry name" value="Pribosyltran"/>
    <property type="match status" value="1"/>
</dbReference>
<dbReference type="SUPFAM" id="SSF53271">
    <property type="entry name" value="PRTase-like"/>
    <property type="match status" value="1"/>
</dbReference>
<reference key="1">
    <citation type="journal article" date="2008" name="PLoS ONE">
        <title>Genome biology of Actinobacillus pleuropneumoniae JL03, an isolate of serotype 3 prevalent in China.</title>
        <authorList>
            <person name="Xu Z."/>
            <person name="Zhou Y."/>
            <person name="Li L."/>
            <person name="Zhou R."/>
            <person name="Xiao S."/>
            <person name="Wan Y."/>
            <person name="Zhang S."/>
            <person name="Wang K."/>
            <person name="Li W."/>
            <person name="Li L."/>
            <person name="Jin H."/>
            <person name="Kang M."/>
            <person name="Dalai B."/>
            <person name="Li T."/>
            <person name="Liu L."/>
            <person name="Cheng Y."/>
            <person name="Zhang L."/>
            <person name="Xu T."/>
            <person name="Zheng H."/>
            <person name="Pu S."/>
            <person name="Wang B."/>
            <person name="Gu W."/>
            <person name="Zhang X.L."/>
            <person name="Zhu G.-F."/>
            <person name="Wang S."/>
            <person name="Zhao G.-P."/>
            <person name="Chen H."/>
        </authorList>
    </citation>
    <scope>NUCLEOTIDE SEQUENCE [LARGE SCALE GENOMIC DNA]</scope>
    <source>
        <strain>JL03</strain>
    </source>
</reference>
<name>PYRR_ACTPJ</name>
<keyword id="KW-0328">Glycosyltransferase</keyword>
<keyword id="KW-0804">Transcription</keyword>
<keyword id="KW-0805">Transcription regulation</keyword>
<keyword id="KW-0808">Transferase</keyword>
<proteinExistence type="inferred from homology"/>